<keyword id="KW-0963">Cytoplasm</keyword>
<keyword id="KW-0520">NAD</keyword>
<keyword id="KW-0521">NADP</keyword>
<keyword id="KW-0560">Oxidoreductase</keyword>
<accession>B7LTA2</accession>
<evidence type="ECO:0000255" key="1">
    <source>
        <dbReference type="HAMAP-Rule" id="MF_01666"/>
    </source>
</evidence>
<gene>
    <name evidence="1" type="primary">ghrA</name>
    <name type="ordered locus">EFER_1897</name>
</gene>
<proteinExistence type="inferred from homology"/>
<dbReference type="EC" id="1.1.1.79" evidence="1"/>
<dbReference type="EC" id="1.1.1.81" evidence="1"/>
<dbReference type="EMBL" id="CU928158">
    <property type="protein sequence ID" value="CAQ89406.1"/>
    <property type="molecule type" value="Genomic_DNA"/>
</dbReference>
<dbReference type="RefSeq" id="WP_000353197.1">
    <property type="nucleotide sequence ID" value="NC_011740.1"/>
</dbReference>
<dbReference type="SMR" id="B7LTA2"/>
<dbReference type="GeneID" id="75057072"/>
<dbReference type="KEGG" id="efe:EFER_1897"/>
<dbReference type="HOGENOM" id="CLU_019796_1_0_6"/>
<dbReference type="OrthoDB" id="9787219at2"/>
<dbReference type="Proteomes" id="UP000000745">
    <property type="component" value="Chromosome"/>
</dbReference>
<dbReference type="GO" id="GO:0005829">
    <property type="term" value="C:cytosol"/>
    <property type="evidence" value="ECO:0007669"/>
    <property type="project" value="UniProtKB-ARBA"/>
</dbReference>
<dbReference type="GO" id="GO:0030267">
    <property type="term" value="F:glyoxylate reductase (NADPH) activity"/>
    <property type="evidence" value="ECO:0007669"/>
    <property type="project" value="UniProtKB-UniRule"/>
</dbReference>
<dbReference type="GO" id="GO:0008465">
    <property type="term" value="F:hydroxypyruvate reductase (NADH) activity"/>
    <property type="evidence" value="ECO:0007669"/>
    <property type="project" value="RHEA"/>
</dbReference>
<dbReference type="GO" id="GO:0120509">
    <property type="term" value="F:hydroxypyruvate reductase (NADPH) activity"/>
    <property type="evidence" value="ECO:0007669"/>
    <property type="project" value="RHEA"/>
</dbReference>
<dbReference type="GO" id="GO:0051287">
    <property type="term" value="F:NAD binding"/>
    <property type="evidence" value="ECO:0007669"/>
    <property type="project" value="InterPro"/>
</dbReference>
<dbReference type="CDD" id="cd12164">
    <property type="entry name" value="GDH_like_2"/>
    <property type="match status" value="1"/>
</dbReference>
<dbReference type="FunFam" id="3.40.50.720:FF:000110">
    <property type="entry name" value="Glyoxylate/hydroxypyruvate reductase A"/>
    <property type="match status" value="1"/>
</dbReference>
<dbReference type="Gene3D" id="3.40.50.720">
    <property type="entry name" value="NAD(P)-binding Rossmann-like Domain"/>
    <property type="match status" value="2"/>
</dbReference>
<dbReference type="HAMAP" id="MF_01666">
    <property type="entry name" value="2_Hacid_dh_C_GhrA"/>
    <property type="match status" value="1"/>
</dbReference>
<dbReference type="InterPro" id="IPR029753">
    <property type="entry name" value="D-isomer_DH_CS"/>
</dbReference>
<dbReference type="InterPro" id="IPR006140">
    <property type="entry name" value="D-isomer_DH_NAD-bd"/>
</dbReference>
<dbReference type="InterPro" id="IPR023514">
    <property type="entry name" value="GhrA_Enterobacterales"/>
</dbReference>
<dbReference type="InterPro" id="IPR036291">
    <property type="entry name" value="NAD(P)-bd_dom_sf"/>
</dbReference>
<dbReference type="NCBIfam" id="NF012013">
    <property type="entry name" value="PRK15469.1"/>
    <property type="match status" value="1"/>
</dbReference>
<dbReference type="PANTHER" id="PTHR43333">
    <property type="entry name" value="2-HACID_DH_C DOMAIN-CONTAINING PROTEIN"/>
    <property type="match status" value="1"/>
</dbReference>
<dbReference type="PANTHER" id="PTHR43333:SF1">
    <property type="entry name" value="D-ISOMER SPECIFIC 2-HYDROXYACID DEHYDROGENASE NAD-BINDING DOMAIN-CONTAINING PROTEIN"/>
    <property type="match status" value="1"/>
</dbReference>
<dbReference type="Pfam" id="PF02826">
    <property type="entry name" value="2-Hacid_dh_C"/>
    <property type="match status" value="1"/>
</dbReference>
<dbReference type="SUPFAM" id="SSF51735">
    <property type="entry name" value="NAD(P)-binding Rossmann-fold domains"/>
    <property type="match status" value="1"/>
</dbReference>
<dbReference type="PROSITE" id="PS00671">
    <property type="entry name" value="D_2_HYDROXYACID_DH_3"/>
    <property type="match status" value="1"/>
</dbReference>
<reference key="1">
    <citation type="journal article" date="2009" name="PLoS Genet.">
        <title>Organised genome dynamics in the Escherichia coli species results in highly diverse adaptive paths.</title>
        <authorList>
            <person name="Touchon M."/>
            <person name="Hoede C."/>
            <person name="Tenaillon O."/>
            <person name="Barbe V."/>
            <person name="Baeriswyl S."/>
            <person name="Bidet P."/>
            <person name="Bingen E."/>
            <person name="Bonacorsi S."/>
            <person name="Bouchier C."/>
            <person name="Bouvet O."/>
            <person name="Calteau A."/>
            <person name="Chiapello H."/>
            <person name="Clermont O."/>
            <person name="Cruveiller S."/>
            <person name="Danchin A."/>
            <person name="Diard M."/>
            <person name="Dossat C."/>
            <person name="Karoui M.E."/>
            <person name="Frapy E."/>
            <person name="Garry L."/>
            <person name="Ghigo J.M."/>
            <person name="Gilles A.M."/>
            <person name="Johnson J."/>
            <person name="Le Bouguenec C."/>
            <person name="Lescat M."/>
            <person name="Mangenot S."/>
            <person name="Martinez-Jehanne V."/>
            <person name="Matic I."/>
            <person name="Nassif X."/>
            <person name="Oztas S."/>
            <person name="Petit M.A."/>
            <person name="Pichon C."/>
            <person name="Rouy Z."/>
            <person name="Ruf C.S."/>
            <person name="Schneider D."/>
            <person name="Tourret J."/>
            <person name="Vacherie B."/>
            <person name="Vallenet D."/>
            <person name="Medigue C."/>
            <person name="Rocha E.P.C."/>
            <person name="Denamur E."/>
        </authorList>
    </citation>
    <scope>NUCLEOTIDE SEQUENCE [LARGE SCALE GENOMIC DNA]</scope>
    <source>
        <strain>ATCC 35469 / DSM 13698 / BCRC 15582 / CCUG 18766 / IAM 14443 / JCM 21226 / LMG 7866 / NBRC 102419 / NCTC 12128 / CDC 0568-73</strain>
    </source>
</reference>
<protein>
    <recommendedName>
        <fullName evidence="1">Glyoxylate/hydroxypyruvate reductase A</fullName>
        <ecNumber evidence="1">1.1.1.79</ecNumber>
        <ecNumber evidence="1">1.1.1.81</ecNumber>
    </recommendedName>
    <alternativeName>
        <fullName evidence="1">2-ketoacid reductase</fullName>
    </alternativeName>
</protein>
<organism>
    <name type="scientific">Escherichia fergusonii (strain ATCC 35469 / DSM 13698 / CCUG 18766 / IAM 14443 / JCM 21226 / LMG 7866 / NBRC 102419 / NCTC 12128 / CDC 0568-73)</name>
    <dbReference type="NCBI Taxonomy" id="585054"/>
    <lineage>
        <taxon>Bacteria</taxon>
        <taxon>Pseudomonadati</taxon>
        <taxon>Pseudomonadota</taxon>
        <taxon>Gammaproteobacteria</taxon>
        <taxon>Enterobacterales</taxon>
        <taxon>Enterobacteriaceae</taxon>
        <taxon>Escherichia</taxon>
    </lineage>
</organism>
<feature type="chain" id="PRO_1000187271" description="Glyoxylate/hydroxypyruvate reductase A">
    <location>
        <begin position="1"/>
        <end position="312"/>
    </location>
</feature>
<feature type="active site" evidence="1">
    <location>
        <position position="227"/>
    </location>
</feature>
<feature type="active site" description="Proton donor" evidence="1">
    <location>
        <position position="275"/>
    </location>
</feature>
<comment type="function">
    <text evidence="1">Catalyzes the NADPH-dependent reduction of glyoxylate and hydroxypyruvate into glycolate and glycerate, respectively.</text>
</comment>
<comment type="catalytic activity">
    <reaction evidence="1">
        <text>glycolate + NADP(+) = glyoxylate + NADPH + H(+)</text>
        <dbReference type="Rhea" id="RHEA:10992"/>
        <dbReference type="ChEBI" id="CHEBI:15378"/>
        <dbReference type="ChEBI" id="CHEBI:29805"/>
        <dbReference type="ChEBI" id="CHEBI:36655"/>
        <dbReference type="ChEBI" id="CHEBI:57783"/>
        <dbReference type="ChEBI" id="CHEBI:58349"/>
        <dbReference type="EC" id="1.1.1.79"/>
    </reaction>
</comment>
<comment type="catalytic activity">
    <reaction evidence="1">
        <text>(R)-glycerate + NAD(+) = 3-hydroxypyruvate + NADH + H(+)</text>
        <dbReference type="Rhea" id="RHEA:17905"/>
        <dbReference type="ChEBI" id="CHEBI:15378"/>
        <dbReference type="ChEBI" id="CHEBI:16659"/>
        <dbReference type="ChEBI" id="CHEBI:17180"/>
        <dbReference type="ChEBI" id="CHEBI:57540"/>
        <dbReference type="ChEBI" id="CHEBI:57945"/>
        <dbReference type="EC" id="1.1.1.81"/>
    </reaction>
</comment>
<comment type="catalytic activity">
    <reaction evidence="1">
        <text>(R)-glycerate + NADP(+) = 3-hydroxypyruvate + NADPH + H(+)</text>
        <dbReference type="Rhea" id="RHEA:18657"/>
        <dbReference type="ChEBI" id="CHEBI:15378"/>
        <dbReference type="ChEBI" id="CHEBI:16659"/>
        <dbReference type="ChEBI" id="CHEBI:17180"/>
        <dbReference type="ChEBI" id="CHEBI:57783"/>
        <dbReference type="ChEBI" id="CHEBI:58349"/>
        <dbReference type="EC" id="1.1.1.81"/>
    </reaction>
</comment>
<comment type="subcellular location">
    <subcellularLocation>
        <location evidence="1">Cytoplasm</location>
    </subcellularLocation>
</comment>
<comment type="similarity">
    <text evidence="1">Belongs to the D-isomer specific 2-hydroxyacid dehydrogenase family. GhrA subfamily.</text>
</comment>
<name>GHRA_ESCF3</name>
<sequence length="312" mass="35230">MDILFYHPTFDTTWWINALREALPEAKVREWKCGDHDPADYALVWHPPVEMLAGRTLKAVFALGAGVDSILSKLQAHPEMLAPSVPLFRLEDTGMGEQMQEYAVSQVLHWFRRFDDYQALKNESRWEPLPEYRKEDFSIGIMGAGVLGSKVAESLKVWGFPLRCWSRSRKSWPGVESFAGKEELGAFLRKTRVLINLLPNTPETVGIINLHLLNQLQDNAYLLNLARGVHVVEDDLLIALNNGKLKGAMLDVFSREPLPAESPLWKHPRVAMTPHVAAVTRPAEAVAYISKTINRLEKGEPVTGQVDRIRGY</sequence>